<reference key="1">
    <citation type="journal article" date="2004" name="Nature">
        <title>The DNA sequence and biology of human chromosome 19.</title>
        <authorList>
            <person name="Grimwood J."/>
            <person name="Gordon L.A."/>
            <person name="Olsen A.S."/>
            <person name="Terry A."/>
            <person name="Schmutz J."/>
            <person name="Lamerdin J.E."/>
            <person name="Hellsten U."/>
            <person name="Goodstein D."/>
            <person name="Couronne O."/>
            <person name="Tran-Gyamfi M."/>
            <person name="Aerts A."/>
            <person name="Altherr M."/>
            <person name="Ashworth L."/>
            <person name="Bajorek E."/>
            <person name="Black S."/>
            <person name="Branscomb E."/>
            <person name="Caenepeel S."/>
            <person name="Carrano A.V."/>
            <person name="Caoile C."/>
            <person name="Chan Y.M."/>
            <person name="Christensen M."/>
            <person name="Cleland C.A."/>
            <person name="Copeland A."/>
            <person name="Dalin E."/>
            <person name="Dehal P."/>
            <person name="Denys M."/>
            <person name="Detter J.C."/>
            <person name="Escobar J."/>
            <person name="Flowers D."/>
            <person name="Fotopulos D."/>
            <person name="Garcia C."/>
            <person name="Georgescu A.M."/>
            <person name="Glavina T."/>
            <person name="Gomez M."/>
            <person name="Gonzales E."/>
            <person name="Groza M."/>
            <person name="Hammon N."/>
            <person name="Hawkins T."/>
            <person name="Haydu L."/>
            <person name="Ho I."/>
            <person name="Huang W."/>
            <person name="Israni S."/>
            <person name="Jett J."/>
            <person name="Kadner K."/>
            <person name="Kimball H."/>
            <person name="Kobayashi A."/>
            <person name="Larionov V."/>
            <person name="Leem S.-H."/>
            <person name="Lopez F."/>
            <person name="Lou Y."/>
            <person name="Lowry S."/>
            <person name="Malfatti S."/>
            <person name="Martinez D."/>
            <person name="McCready P.M."/>
            <person name="Medina C."/>
            <person name="Morgan J."/>
            <person name="Nelson K."/>
            <person name="Nolan M."/>
            <person name="Ovcharenko I."/>
            <person name="Pitluck S."/>
            <person name="Pollard M."/>
            <person name="Popkie A.P."/>
            <person name="Predki P."/>
            <person name="Quan G."/>
            <person name="Ramirez L."/>
            <person name="Rash S."/>
            <person name="Retterer J."/>
            <person name="Rodriguez A."/>
            <person name="Rogers S."/>
            <person name="Salamov A."/>
            <person name="Salazar A."/>
            <person name="She X."/>
            <person name="Smith D."/>
            <person name="Slezak T."/>
            <person name="Solovyev V."/>
            <person name="Thayer N."/>
            <person name="Tice H."/>
            <person name="Tsai M."/>
            <person name="Ustaszewska A."/>
            <person name="Vo N."/>
            <person name="Wagner M."/>
            <person name="Wheeler J."/>
            <person name="Wu K."/>
            <person name="Xie G."/>
            <person name="Yang J."/>
            <person name="Dubchak I."/>
            <person name="Furey T.S."/>
            <person name="DeJong P."/>
            <person name="Dickson M."/>
            <person name="Gordon D."/>
            <person name="Eichler E.E."/>
            <person name="Pennacchio L.A."/>
            <person name="Richardson P."/>
            <person name="Stubbs L."/>
            <person name="Rokhsar D.S."/>
            <person name="Myers R.M."/>
            <person name="Rubin E.M."/>
            <person name="Lucas S.M."/>
        </authorList>
    </citation>
    <scope>NUCLEOTIDE SEQUENCE [LARGE SCALE GENOMIC DNA]</scope>
</reference>
<reference key="2">
    <citation type="submission" date="2003-01" db="EMBL/GenBank/DDBJ databases">
        <title>Full-length cDNA libraries and normalization.</title>
        <authorList>
            <person name="Li W.B."/>
            <person name="Gruber C."/>
            <person name="Jessee J."/>
            <person name="Polayes D."/>
        </authorList>
    </citation>
    <scope>NUCLEOTIDE SEQUENCE [LARGE SCALE MRNA] OF 98-336</scope>
    <source>
        <tissue>Neuroblastoma</tissue>
    </source>
</reference>
<proteinExistence type="evidence at protein level"/>
<feature type="signal peptide" evidence="1">
    <location>
        <begin position="1"/>
        <end position="30"/>
    </location>
</feature>
<feature type="chain" id="PRO_0000332301" description="IgLON family member 5">
    <location>
        <begin position="31"/>
        <end position="336"/>
    </location>
</feature>
<feature type="domain" description="Ig-like C2-type 1">
    <location>
        <begin position="33"/>
        <end position="122"/>
    </location>
</feature>
<feature type="domain" description="Ig-like C2-type 2">
    <location>
        <begin position="132"/>
        <end position="217"/>
    </location>
</feature>
<feature type="domain" description="Ig-like C2-type 3">
    <location>
        <begin position="218"/>
        <end position="307"/>
    </location>
</feature>
<feature type="glycosylation site" description="N-linked (GlcNAc...) asparagine" evidence="1">
    <location>
        <position position="41"/>
    </location>
</feature>
<feature type="glycosylation site" description="N-linked (GlcNAc...) asparagine" evidence="1">
    <location>
        <position position="49"/>
    </location>
</feature>
<feature type="glycosylation site" description="N-linked (GlcNAc...) asparagine" evidence="1">
    <location>
        <position position="67"/>
    </location>
</feature>
<feature type="glycosylation site" description="N-linked (GlcNAc...) asparagine" evidence="1">
    <location>
        <position position="137"/>
    </location>
</feature>
<feature type="glycosylation site" description="N-linked (GlcNAc...) asparagine" evidence="1">
    <location>
        <position position="288"/>
    </location>
</feature>
<feature type="disulfide bond" evidence="2">
    <location>
        <begin position="54"/>
        <end position="112"/>
    </location>
</feature>
<feature type="disulfide bond" evidence="2">
    <location>
        <begin position="154"/>
        <end position="195"/>
    </location>
</feature>
<feature type="disulfide bond" evidence="2">
    <location>
        <begin position="238"/>
        <end position="291"/>
    </location>
</feature>
<feature type="strand" evidence="4">
    <location>
        <begin position="38"/>
        <end position="45"/>
    </location>
</feature>
<feature type="strand" evidence="4">
    <location>
        <begin position="50"/>
        <end position="55"/>
    </location>
</feature>
<feature type="strand" evidence="4">
    <location>
        <begin position="62"/>
        <end position="67"/>
    </location>
</feature>
<feature type="strand" evidence="4">
    <location>
        <begin position="70"/>
        <end position="74"/>
    </location>
</feature>
<feature type="strand" evidence="4">
    <location>
        <begin position="85"/>
        <end position="89"/>
    </location>
</feature>
<feature type="strand" evidence="4">
    <location>
        <begin position="94"/>
        <end position="101"/>
    </location>
</feature>
<feature type="helix" evidence="4">
    <location>
        <begin position="104"/>
        <end position="106"/>
    </location>
</feature>
<feature type="strand" evidence="4">
    <location>
        <begin position="108"/>
        <end position="115"/>
    </location>
</feature>
<feature type="strand" evidence="4">
    <location>
        <begin position="120"/>
        <end position="138"/>
    </location>
</feature>
<feature type="strand" evidence="4">
    <location>
        <begin position="142"/>
        <end position="145"/>
    </location>
</feature>
<feature type="strand" evidence="4">
    <location>
        <begin position="149"/>
        <end position="160"/>
    </location>
</feature>
<feature type="strand" evidence="4">
    <location>
        <begin position="163"/>
        <end position="171"/>
    </location>
</feature>
<feature type="strand" evidence="4">
    <location>
        <begin position="177"/>
        <end position="184"/>
    </location>
</feature>
<feature type="helix" evidence="4">
    <location>
        <begin position="187"/>
        <end position="189"/>
    </location>
</feature>
<feature type="strand" evidence="4">
    <location>
        <begin position="191"/>
        <end position="198"/>
    </location>
</feature>
<feature type="strand" evidence="4">
    <location>
        <begin position="200"/>
        <end position="203"/>
    </location>
</feature>
<feature type="strand" evidence="4">
    <location>
        <begin position="208"/>
        <end position="224"/>
    </location>
</feature>
<feature type="strand" evidence="4">
    <location>
        <begin position="234"/>
        <end position="244"/>
    </location>
</feature>
<feature type="strand" evidence="4">
    <location>
        <begin position="247"/>
        <end position="252"/>
    </location>
</feature>
<feature type="helix" evidence="4">
    <location>
        <begin position="262"/>
        <end position="264"/>
    </location>
</feature>
<feature type="strand" evidence="4">
    <location>
        <begin position="265"/>
        <end position="269"/>
    </location>
</feature>
<feature type="strand" evidence="4">
    <location>
        <begin position="271"/>
        <end position="278"/>
    </location>
</feature>
<feature type="turn" evidence="4">
    <location>
        <begin position="283"/>
        <end position="285"/>
    </location>
</feature>
<feature type="strand" evidence="4">
    <location>
        <begin position="287"/>
        <end position="294"/>
    </location>
</feature>
<feature type="strand" evidence="4">
    <location>
        <begin position="299"/>
        <end position="307"/>
    </location>
</feature>
<organism>
    <name type="scientific">Homo sapiens</name>
    <name type="common">Human</name>
    <dbReference type="NCBI Taxonomy" id="9606"/>
    <lineage>
        <taxon>Eukaryota</taxon>
        <taxon>Metazoa</taxon>
        <taxon>Chordata</taxon>
        <taxon>Craniata</taxon>
        <taxon>Vertebrata</taxon>
        <taxon>Euteleostomi</taxon>
        <taxon>Mammalia</taxon>
        <taxon>Eutheria</taxon>
        <taxon>Euarchontoglires</taxon>
        <taxon>Primates</taxon>
        <taxon>Haplorrhini</taxon>
        <taxon>Catarrhini</taxon>
        <taxon>Hominidae</taxon>
        <taxon>Homo</taxon>
    </lineage>
</organism>
<keyword id="KW-0002">3D-structure</keyword>
<keyword id="KW-1015">Disulfide bond</keyword>
<keyword id="KW-0325">Glycoprotein</keyword>
<keyword id="KW-0393">Immunoglobulin domain</keyword>
<keyword id="KW-1267">Proteomics identification</keyword>
<keyword id="KW-1185">Reference proteome</keyword>
<keyword id="KW-0677">Repeat</keyword>
<keyword id="KW-0964">Secreted</keyword>
<keyword id="KW-0732">Signal</keyword>
<comment type="subcellular location">
    <subcellularLocation>
        <location evidence="3">Secreted</location>
    </subcellularLocation>
</comment>
<comment type="similarity">
    <text evidence="3">Belongs to the immunoglobulin superfamily. IgLON family.</text>
</comment>
<sequence length="336" mass="36795">MPPPAPGARLRLLAAAALAGLAVISRGLLSQSLEFNSPADNYTVCEGDNATLSCFIDEHVTRVAWLNRSNILYAGNDRWTSDPRVRLLINTPEEFSILITEVGLGDEGLYTCSFQTRHQPYTTQVYLIVHVPARIVNISSPVTVNEGGNVNLLCLAVGRPEPTVTWRQLRDGFTSEGEILEISDIQRGQAGEYECVTHNGVNSAPDSRRVLVTVNYPPTITDVTSARTALGRAALLRCEAMAVPPADFQWYKDDRLLSSGTAEGLKVQTERTRSMLLFANVSARHYGNYTCRAANRLGASSASMRLLRPGSLENSAPRPPGLLALLSALGWLWWRM</sequence>
<protein>
    <recommendedName>
        <fullName>IgLON family member 5</fullName>
    </recommendedName>
</protein>
<dbReference type="EMBL" id="AC063977">
    <property type="status" value="NOT_ANNOTATED_CDS"/>
    <property type="molecule type" value="Genomic_DNA"/>
</dbReference>
<dbReference type="EMBL" id="CR592222">
    <property type="status" value="NOT_ANNOTATED_CDS"/>
    <property type="molecule type" value="mRNA"/>
</dbReference>
<dbReference type="CCDS" id="CCDS46158.1"/>
<dbReference type="RefSeq" id="NP_001094842.1">
    <property type="nucleotide sequence ID" value="NM_001101372.3"/>
</dbReference>
<dbReference type="PDB" id="6DLD">
    <property type="method" value="X-ray"/>
    <property type="resolution" value="3.30 A"/>
    <property type="chains" value="A/C=31-316"/>
</dbReference>
<dbReference type="PDB" id="6DLE">
    <property type="method" value="X-ray"/>
    <property type="resolution" value="3.99 A"/>
    <property type="chains" value="A/B=31-316"/>
</dbReference>
<dbReference type="PDBsum" id="6DLD"/>
<dbReference type="PDBsum" id="6DLE"/>
<dbReference type="SMR" id="A6NGN9"/>
<dbReference type="FunCoup" id="A6NGN9">
    <property type="interactions" value="45"/>
</dbReference>
<dbReference type="IntAct" id="A6NGN9">
    <property type="interactions" value="1"/>
</dbReference>
<dbReference type="STRING" id="9606.ENSP00000270642"/>
<dbReference type="GlyCosmos" id="A6NGN9">
    <property type="glycosylation" value="5 sites, No reported glycans"/>
</dbReference>
<dbReference type="GlyGen" id="A6NGN9">
    <property type="glycosylation" value="5 sites"/>
</dbReference>
<dbReference type="iPTMnet" id="A6NGN9"/>
<dbReference type="PhosphoSitePlus" id="A6NGN9"/>
<dbReference type="BioMuta" id="IGLON5"/>
<dbReference type="jPOST" id="A6NGN9"/>
<dbReference type="MassIVE" id="A6NGN9"/>
<dbReference type="PaxDb" id="9606-ENSP00000270642"/>
<dbReference type="PeptideAtlas" id="A6NGN9"/>
<dbReference type="ProteomicsDB" id="1141"/>
<dbReference type="Antibodypedia" id="49473">
    <property type="antibodies" value="23 antibodies from 11 providers"/>
</dbReference>
<dbReference type="DNASU" id="402665"/>
<dbReference type="Ensembl" id="ENST00000270642.9">
    <property type="protein sequence ID" value="ENSP00000270642.8"/>
    <property type="gene ID" value="ENSG00000142549.10"/>
</dbReference>
<dbReference type="GeneID" id="402665"/>
<dbReference type="KEGG" id="hsa:402665"/>
<dbReference type="MANE-Select" id="ENST00000270642.9">
    <property type="protein sequence ID" value="ENSP00000270642.8"/>
    <property type="RefSeq nucleotide sequence ID" value="NM_001101372.3"/>
    <property type="RefSeq protein sequence ID" value="NP_001094842.1"/>
</dbReference>
<dbReference type="UCSC" id="uc002pwc.3">
    <property type="organism name" value="human"/>
</dbReference>
<dbReference type="AGR" id="HGNC:34550"/>
<dbReference type="CTD" id="402665"/>
<dbReference type="DisGeNET" id="402665"/>
<dbReference type="GeneCards" id="IGLON5"/>
<dbReference type="HGNC" id="HGNC:34550">
    <property type="gene designation" value="IGLON5"/>
</dbReference>
<dbReference type="HPA" id="ENSG00000142549">
    <property type="expression patterns" value="Tissue enriched (brain)"/>
</dbReference>
<dbReference type="MIM" id="618861">
    <property type="type" value="gene"/>
</dbReference>
<dbReference type="neXtProt" id="NX_A6NGN9"/>
<dbReference type="OpenTargets" id="ENSG00000142549"/>
<dbReference type="PharmGKB" id="PA164720915"/>
<dbReference type="VEuPathDB" id="HostDB:ENSG00000142549"/>
<dbReference type="eggNOG" id="KOG3510">
    <property type="taxonomic scope" value="Eukaryota"/>
</dbReference>
<dbReference type="GeneTree" id="ENSGT00940000160467"/>
<dbReference type="HOGENOM" id="CLU_027228_2_3_1"/>
<dbReference type="InParanoid" id="A6NGN9"/>
<dbReference type="OMA" id="GEAYGEQ"/>
<dbReference type="OrthoDB" id="6159398at2759"/>
<dbReference type="PAN-GO" id="A6NGN9">
    <property type="GO annotations" value="0 GO annotations based on evolutionary models"/>
</dbReference>
<dbReference type="PhylomeDB" id="A6NGN9"/>
<dbReference type="TreeFam" id="TF325565"/>
<dbReference type="PathwayCommons" id="A6NGN9"/>
<dbReference type="SignaLink" id="A6NGN9"/>
<dbReference type="BioGRID-ORCS" id="402665">
    <property type="hits" value="131 hits in 1103 CRISPR screens"/>
</dbReference>
<dbReference type="ChiTaRS" id="IGLON5">
    <property type="organism name" value="human"/>
</dbReference>
<dbReference type="GenomeRNAi" id="402665"/>
<dbReference type="Pharos" id="A6NGN9">
    <property type="development level" value="Tdark"/>
</dbReference>
<dbReference type="PRO" id="PR:A6NGN9"/>
<dbReference type="Proteomes" id="UP000005640">
    <property type="component" value="Chromosome 19"/>
</dbReference>
<dbReference type="RNAct" id="A6NGN9">
    <property type="molecule type" value="protein"/>
</dbReference>
<dbReference type="Bgee" id="ENSG00000142549">
    <property type="expression patterns" value="Expressed in ganglionic eminence and 126 other cell types or tissues"/>
</dbReference>
<dbReference type="GO" id="GO:0005576">
    <property type="term" value="C:extracellular region"/>
    <property type="evidence" value="ECO:0007669"/>
    <property type="project" value="UniProtKB-SubCell"/>
</dbReference>
<dbReference type="GO" id="GO:0061744">
    <property type="term" value="P:motor behavior"/>
    <property type="evidence" value="ECO:0007669"/>
    <property type="project" value="Ensembl"/>
</dbReference>
<dbReference type="GO" id="GO:0050885">
    <property type="term" value="P:neuromuscular process controlling balance"/>
    <property type="evidence" value="ECO:0007669"/>
    <property type="project" value="Ensembl"/>
</dbReference>
<dbReference type="FunFam" id="2.60.40.10:FF:000013">
    <property type="entry name" value="cell adhesion molecule 1 isoform X1"/>
    <property type="match status" value="1"/>
</dbReference>
<dbReference type="FunFam" id="2.60.40.10:FF:000305">
    <property type="entry name" value="neurotrimin isoform X2"/>
    <property type="match status" value="1"/>
</dbReference>
<dbReference type="Gene3D" id="2.60.40.10">
    <property type="entry name" value="Immunoglobulins"/>
    <property type="match status" value="3"/>
</dbReference>
<dbReference type="InterPro" id="IPR007110">
    <property type="entry name" value="Ig-like_dom"/>
</dbReference>
<dbReference type="InterPro" id="IPR036179">
    <property type="entry name" value="Ig-like_dom_sf"/>
</dbReference>
<dbReference type="InterPro" id="IPR013783">
    <property type="entry name" value="Ig-like_fold"/>
</dbReference>
<dbReference type="InterPro" id="IPR003599">
    <property type="entry name" value="Ig_sub"/>
</dbReference>
<dbReference type="InterPro" id="IPR003598">
    <property type="entry name" value="Ig_sub2"/>
</dbReference>
<dbReference type="InterPro" id="IPR013106">
    <property type="entry name" value="Ig_V-set"/>
</dbReference>
<dbReference type="InterPro" id="IPR050876">
    <property type="entry name" value="IgLON_domain"/>
</dbReference>
<dbReference type="PANTHER" id="PTHR42757:SF12">
    <property type="entry name" value="IGLON FAMILY MEMBER 5"/>
    <property type="match status" value="1"/>
</dbReference>
<dbReference type="PANTHER" id="PTHR42757">
    <property type="entry name" value="IGLON FAMILY OF IMMUNOGLOBULIN SUPERFAMILY-RELATED"/>
    <property type="match status" value="1"/>
</dbReference>
<dbReference type="Pfam" id="PF13927">
    <property type="entry name" value="Ig_3"/>
    <property type="match status" value="2"/>
</dbReference>
<dbReference type="Pfam" id="PF07686">
    <property type="entry name" value="V-set"/>
    <property type="match status" value="1"/>
</dbReference>
<dbReference type="SMART" id="SM00409">
    <property type="entry name" value="IG"/>
    <property type="match status" value="3"/>
</dbReference>
<dbReference type="SMART" id="SM00408">
    <property type="entry name" value="IGc2"/>
    <property type="match status" value="3"/>
</dbReference>
<dbReference type="SUPFAM" id="SSF48726">
    <property type="entry name" value="Immunoglobulin"/>
    <property type="match status" value="3"/>
</dbReference>
<dbReference type="PROSITE" id="PS50835">
    <property type="entry name" value="IG_LIKE"/>
    <property type="match status" value="3"/>
</dbReference>
<evidence type="ECO:0000255" key="1"/>
<evidence type="ECO:0000255" key="2">
    <source>
        <dbReference type="PROSITE-ProRule" id="PRU00114"/>
    </source>
</evidence>
<evidence type="ECO:0000305" key="3"/>
<evidence type="ECO:0007829" key="4">
    <source>
        <dbReference type="PDB" id="6DLD"/>
    </source>
</evidence>
<accession>A6NGN9</accession>
<name>IGLO5_HUMAN</name>
<gene>
    <name type="primary">IGLON5</name>
</gene>